<feature type="signal peptide" evidence="2">
    <location>
        <begin position="1"/>
        <end position="20"/>
    </location>
</feature>
<feature type="chain" id="PRO_0000281664" description="Phosphate-binding protein PstS">
    <location>
        <begin position="21"/>
        <end position="316"/>
    </location>
</feature>
<feature type="region of interest" description="Disordered" evidence="3">
    <location>
        <begin position="23"/>
        <end position="49"/>
    </location>
</feature>
<feature type="compositionally biased region" description="Gly residues" evidence="3">
    <location>
        <begin position="23"/>
        <end position="32"/>
    </location>
</feature>
<feature type="compositionally biased region" description="Basic and acidic residues" evidence="3">
    <location>
        <begin position="33"/>
        <end position="43"/>
    </location>
</feature>
<feature type="lipid moiety-binding region" description="N-palmitoyl cysteine" evidence="2">
    <location>
        <position position="21"/>
    </location>
</feature>
<feature type="lipid moiety-binding region" description="S-diacylglycerol cysteine" evidence="2">
    <location>
        <position position="21"/>
    </location>
</feature>
<accession>Q4L694</accession>
<proteinExistence type="inferred from homology"/>
<reference key="1">
    <citation type="journal article" date="2005" name="J. Bacteriol.">
        <title>Whole-genome sequencing of Staphylococcus haemolyticus uncovers the extreme plasticity of its genome and the evolution of human-colonizing staphylococcal species.</title>
        <authorList>
            <person name="Takeuchi F."/>
            <person name="Watanabe S."/>
            <person name="Baba T."/>
            <person name="Yuzawa H."/>
            <person name="Ito T."/>
            <person name="Morimoto Y."/>
            <person name="Kuroda M."/>
            <person name="Cui L."/>
            <person name="Takahashi M."/>
            <person name="Ankai A."/>
            <person name="Baba S."/>
            <person name="Fukui S."/>
            <person name="Lee J.C."/>
            <person name="Hiramatsu K."/>
        </authorList>
    </citation>
    <scope>NUCLEOTIDE SEQUENCE [LARGE SCALE GENOMIC DNA]</scope>
    <source>
        <strain>JCSC1435</strain>
    </source>
</reference>
<sequence length="316" mass="35118">MKKWQLVGTTVLGASVLLGACGGGDSSGSGSGDGKDLKGEAKGEGSSTVAPIVEKLNEKWAKDHPNATISSGQAGTGAGFEKFIAGETDFSQASRPIKDEEKQKLEDKDIKYKEFKIAQDGVTVAVNKDNDFVKELSKDQLKKIYNGEAKTWKDVNSSWPDKKIKAFSPNSSHGTYDFFEEEVMDKEDIKAEKNGDTNVIVQSVEKNKEGIGYFGYNFYEQNKDKLKEVKIKDDKGKTTEPTKKTIKDGSYALSRPLFLYVKEKSLKDNDVMREFIKFTLEDKGKSAEDAGYVASPEKTYKDELKDLKKYDKKSDK</sequence>
<comment type="function">
    <text evidence="1">Part of the ABC transporter complex PstSACB involved in phosphate import.</text>
</comment>
<comment type="subunit">
    <text evidence="4">The complex is composed of two ATP-binding proteins (PstB), two transmembrane proteins (PstC and PstA) and a solute-binding protein (PstS).</text>
</comment>
<comment type="subcellular location">
    <subcellularLocation>
        <location evidence="4">Cell membrane</location>
        <topology evidence="4">Lipid-anchor</topology>
    </subcellularLocation>
</comment>
<comment type="similarity">
    <text evidence="4">Belongs to the PstS family.</text>
</comment>
<name>PSTS_STAHJ</name>
<gene>
    <name type="primary">pstS</name>
    <name type="ordered locus">SH1522</name>
</gene>
<evidence type="ECO:0000250" key="1"/>
<evidence type="ECO:0000255" key="2">
    <source>
        <dbReference type="PROSITE-ProRule" id="PRU00303"/>
    </source>
</evidence>
<evidence type="ECO:0000256" key="3">
    <source>
        <dbReference type="SAM" id="MobiDB-lite"/>
    </source>
</evidence>
<evidence type="ECO:0000305" key="4"/>
<keyword id="KW-1003">Cell membrane</keyword>
<keyword id="KW-0449">Lipoprotein</keyword>
<keyword id="KW-0472">Membrane</keyword>
<keyword id="KW-0564">Palmitate</keyword>
<keyword id="KW-0592">Phosphate transport</keyword>
<keyword id="KW-0732">Signal</keyword>
<keyword id="KW-0813">Transport</keyword>
<organism>
    <name type="scientific">Staphylococcus haemolyticus (strain JCSC1435)</name>
    <dbReference type="NCBI Taxonomy" id="279808"/>
    <lineage>
        <taxon>Bacteria</taxon>
        <taxon>Bacillati</taxon>
        <taxon>Bacillota</taxon>
        <taxon>Bacilli</taxon>
        <taxon>Bacillales</taxon>
        <taxon>Staphylococcaceae</taxon>
        <taxon>Staphylococcus</taxon>
    </lineage>
</organism>
<protein>
    <recommendedName>
        <fullName>Phosphate-binding protein PstS</fullName>
        <shortName>PBP</shortName>
    </recommendedName>
</protein>
<dbReference type="EMBL" id="AP006716">
    <property type="protein sequence ID" value="BAE04831.1"/>
    <property type="molecule type" value="Genomic_DNA"/>
</dbReference>
<dbReference type="RefSeq" id="WP_011275814.1">
    <property type="nucleotide sequence ID" value="NC_007168.1"/>
</dbReference>
<dbReference type="SMR" id="Q4L694"/>
<dbReference type="KEGG" id="sha:SH1522"/>
<dbReference type="eggNOG" id="COG0226">
    <property type="taxonomic scope" value="Bacteria"/>
</dbReference>
<dbReference type="HOGENOM" id="CLU_026228_1_0_9"/>
<dbReference type="OrthoDB" id="9790048at2"/>
<dbReference type="Proteomes" id="UP000000543">
    <property type="component" value="Chromosome"/>
</dbReference>
<dbReference type="GO" id="GO:0005886">
    <property type="term" value="C:plasma membrane"/>
    <property type="evidence" value="ECO:0007669"/>
    <property type="project" value="UniProtKB-SubCell"/>
</dbReference>
<dbReference type="GO" id="GO:0042301">
    <property type="term" value="F:phosphate ion binding"/>
    <property type="evidence" value="ECO:0007669"/>
    <property type="project" value="InterPro"/>
</dbReference>
<dbReference type="GO" id="GO:0006817">
    <property type="term" value="P:phosphate ion transport"/>
    <property type="evidence" value="ECO:0007669"/>
    <property type="project" value="UniProtKB-KW"/>
</dbReference>
<dbReference type="CDD" id="cd13654">
    <property type="entry name" value="PBP2_phosphate_like_2"/>
    <property type="match status" value="1"/>
</dbReference>
<dbReference type="Gene3D" id="3.40.190.10">
    <property type="entry name" value="Periplasmic binding protein-like II"/>
    <property type="match status" value="2"/>
</dbReference>
<dbReference type="InterPro" id="IPR024370">
    <property type="entry name" value="PBP_domain"/>
</dbReference>
<dbReference type="InterPro" id="IPR011862">
    <property type="entry name" value="Phos-bd"/>
</dbReference>
<dbReference type="InterPro" id="IPR050811">
    <property type="entry name" value="Phosphate_ABC_transporter"/>
</dbReference>
<dbReference type="NCBIfam" id="TIGR02136">
    <property type="entry name" value="ptsS_2"/>
    <property type="match status" value="1"/>
</dbReference>
<dbReference type="PANTHER" id="PTHR30570">
    <property type="entry name" value="PERIPLASMIC PHOSPHATE BINDING COMPONENT OF PHOSPHATE ABC TRANSPORTER"/>
    <property type="match status" value="1"/>
</dbReference>
<dbReference type="PANTHER" id="PTHR30570:SF1">
    <property type="entry name" value="PHOSPHATE-BINDING PROTEIN PSTS"/>
    <property type="match status" value="1"/>
</dbReference>
<dbReference type="Pfam" id="PF12849">
    <property type="entry name" value="PBP_like_2"/>
    <property type="match status" value="1"/>
</dbReference>
<dbReference type="SUPFAM" id="SSF53850">
    <property type="entry name" value="Periplasmic binding protein-like II"/>
    <property type="match status" value="1"/>
</dbReference>
<dbReference type="PROSITE" id="PS51257">
    <property type="entry name" value="PROKAR_LIPOPROTEIN"/>
    <property type="match status" value="1"/>
</dbReference>